<accession>B2JIH8</accession>
<sequence>MAKKIIGFIKLQIPAGKANPSPPVGPALGQRGLNIMEFCKAFNAQTQALEPGLPIPVVITAFADKSFTFVLKTPPATVLIKKAAKIDKGSSKPHTDKVGKITRAQAEEIAKTKMPDLTAADLDAAVRTIAGSARSMGITVEGV</sequence>
<dbReference type="EMBL" id="CP001043">
    <property type="protein sequence ID" value="ACC72024.1"/>
    <property type="molecule type" value="Genomic_DNA"/>
</dbReference>
<dbReference type="RefSeq" id="WP_012402205.1">
    <property type="nucleotide sequence ID" value="NZ_CADFGH010000044.1"/>
</dbReference>
<dbReference type="SMR" id="B2JIH8"/>
<dbReference type="STRING" id="391038.Bphy_2852"/>
<dbReference type="KEGG" id="bph:Bphy_2852"/>
<dbReference type="eggNOG" id="COG0080">
    <property type="taxonomic scope" value="Bacteria"/>
</dbReference>
<dbReference type="HOGENOM" id="CLU_074237_2_0_4"/>
<dbReference type="OrthoDB" id="9802408at2"/>
<dbReference type="Proteomes" id="UP000001192">
    <property type="component" value="Chromosome 1"/>
</dbReference>
<dbReference type="GO" id="GO:0022625">
    <property type="term" value="C:cytosolic large ribosomal subunit"/>
    <property type="evidence" value="ECO:0007669"/>
    <property type="project" value="TreeGrafter"/>
</dbReference>
<dbReference type="GO" id="GO:0070180">
    <property type="term" value="F:large ribosomal subunit rRNA binding"/>
    <property type="evidence" value="ECO:0007669"/>
    <property type="project" value="UniProtKB-UniRule"/>
</dbReference>
<dbReference type="GO" id="GO:0003735">
    <property type="term" value="F:structural constituent of ribosome"/>
    <property type="evidence" value="ECO:0007669"/>
    <property type="project" value="InterPro"/>
</dbReference>
<dbReference type="GO" id="GO:0006412">
    <property type="term" value="P:translation"/>
    <property type="evidence" value="ECO:0007669"/>
    <property type="project" value="UniProtKB-UniRule"/>
</dbReference>
<dbReference type="CDD" id="cd00349">
    <property type="entry name" value="Ribosomal_L11"/>
    <property type="match status" value="1"/>
</dbReference>
<dbReference type="FunFam" id="1.10.10.250:FF:000001">
    <property type="entry name" value="50S ribosomal protein L11"/>
    <property type="match status" value="1"/>
</dbReference>
<dbReference type="FunFam" id="3.30.1550.10:FF:000001">
    <property type="entry name" value="50S ribosomal protein L11"/>
    <property type="match status" value="1"/>
</dbReference>
<dbReference type="Gene3D" id="1.10.10.250">
    <property type="entry name" value="Ribosomal protein L11, C-terminal domain"/>
    <property type="match status" value="1"/>
</dbReference>
<dbReference type="Gene3D" id="3.30.1550.10">
    <property type="entry name" value="Ribosomal protein L11/L12, N-terminal domain"/>
    <property type="match status" value="1"/>
</dbReference>
<dbReference type="HAMAP" id="MF_00736">
    <property type="entry name" value="Ribosomal_uL11"/>
    <property type="match status" value="1"/>
</dbReference>
<dbReference type="InterPro" id="IPR000911">
    <property type="entry name" value="Ribosomal_uL11"/>
</dbReference>
<dbReference type="InterPro" id="IPR006519">
    <property type="entry name" value="Ribosomal_uL11_bac-typ"/>
</dbReference>
<dbReference type="InterPro" id="IPR020783">
    <property type="entry name" value="Ribosomal_uL11_C"/>
</dbReference>
<dbReference type="InterPro" id="IPR036769">
    <property type="entry name" value="Ribosomal_uL11_C_sf"/>
</dbReference>
<dbReference type="InterPro" id="IPR020785">
    <property type="entry name" value="Ribosomal_uL11_CS"/>
</dbReference>
<dbReference type="InterPro" id="IPR020784">
    <property type="entry name" value="Ribosomal_uL11_N"/>
</dbReference>
<dbReference type="InterPro" id="IPR036796">
    <property type="entry name" value="Ribosomal_uL11_N_sf"/>
</dbReference>
<dbReference type="NCBIfam" id="TIGR01632">
    <property type="entry name" value="L11_bact"/>
    <property type="match status" value="1"/>
</dbReference>
<dbReference type="PANTHER" id="PTHR11661">
    <property type="entry name" value="60S RIBOSOMAL PROTEIN L12"/>
    <property type="match status" value="1"/>
</dbReference>
<dbReference type="PANTHER" id="PTHR11661:SF1">
    <property type="entry name" value="LARGE RIBOSOMAL SUBUNIT PROTEIN UL11M"/>
    <property type="match status" value="1"/>
</dbReference>
<dbReference type="Pfam" id="PF00298">
    <property type="entry name" value="Ribosomal_L11"/>
    <property type="match status" value="1"/>
</dbReference>
<dbReference type="Pfam" id="PF03946">
    <property type="entry name" value="Ribosomal_L11_N"/>
    <property type="match status" value="1"/>
</dbReference>
<dbReference type="SMART" id="SM00649">
    <property type="entry name" value="RL11"/>
    <property type="match status" value="1"/>
</dbReference>
<dbReference type="SUPFAM" id="SSF54747">
    <property type="entry name" value="Ribosomal L11/L12e N-terminal domain"/>
    <property type="match status" value="1"/>
</dbReference>
<dbReference type="SUPFAM" id="SSF46906">
    <property type="entry name" value="Ribosomal protein L11, C-terminal domain"/>
    <property type="match status" value="1"/>
</dbReference>
<dbReference type="PROSITE" id="PS00359">
    <property type="entry name" value="RIBOSOMAL_L11"/>
    <property type="match status" value="1"/>
</dbReference>
<comment type="function">
    <text evidence="1">Forms part of the ribosomal stalk which helps the ribosome interact with GTP-bound translation factors.</text>
</comment>
<comment type="subunit">
    <text evidence="1">Part of the ribosomal stalk of the 50S ribosomal subunit. Interacts with L10 and the large rRNA to form the base of the stalk. L10 forms an elongated spine to which L12 dimers bind in a sequential fashion forming a multimeric L10(L12)X complex.</text>
</comment>
<comment type="PTM">
    <text evidence="1">One or more lysine residues are methylated.</text>
</comment>
<comment type="similarity">
    <text evidence="1">Belongs to the universal ribosomal protein uL11 family.</text>
</comment>
<feature type="chain" id="PRO_1000132875" description="Large ribosomal subunit protein uL11">
    <location>
        <begin position="1"/>
        <end position="143"/>
    </location>
</feature>
<protein>
    <recommendedName>
        <fullName evidence="1">Large ribosomal subunit protein uL11</fullName>
    </recommendedName>
    <alternativeName>
        <fullName evidence="2">50S ribosomal protein L11</fullName>
    </alternativeName>
</protein>
<organism>
    <name type="scientific">Paraburkholderia phymatum (strain DSM 17167 / CIP 108236 / LMG 21445 / STM815)</name>
    <name type="common">Burkholderia phymatum</name>
    <dbReference type="NCBI Taxonomy" id="391038"/>
    <lineage>
        <taxon>Bacteria</taxon>
        <taxon>Pseudomonadati</taxon>
        <taxon>Pseudomonadota</taxon>
        <taxon>Betaproteobacteria</taxon>
        <taxon>Burkholderiales</taxon>
        <taxon>Burkholderiaceae</taxon>
        <taxon>Paraburkholderia</taxon>
    </lineage>
</organism>
<name>RL11_PARP8</name>
<proteinExistence type="inferred from homology"/>
<reference key="1">
    <citation type="journal article" date="2014" name="Stand. Genomic Sci.">
        <title>Complete genome sequence of Burkholderia phymatum STM815(T), a broad host range and efficient nitrogen-fixing symbiont of Mimosa species.</title>
        <authorList>
            <person name="Moulin L."/>
            <person name="Klonowska A."/>
            <person name="Caroline B."/>
            <person name="Booth K."/>
            <person name="Vriezen J.A."/>
            <person name="Melkonian R."/>
            <person name="James E.K."/>
            <person name="Young J.P."/>
            <person name="Bena G."/>
            <person name="Hauser L."/>
            <person name="Land M."/>
            <person name="Kyrpides N."/>
            <person name="Bruce D."/>
            <person name="Chain P."/>
            <person name="Copeland A."/>
            <person name="Pitluck S."/>
            <person name="Woyke T."/>
            <person name="Lizotte-Waniewski M."/>
            <person name="Bristow J."/>
            <person name="Riley M."/>
        </authorList>
    </citation>
    <scope>NUCLEOTIDE SEQUENCE [LARGE SCALE GENOMIC DNA]</scope>
    <source>
        <strain>DSM 17167 / CIP 108236 / LMG 21445 / STM815</strain>
    </source>
</reference>
<gene>
    <name evidence="1" type="primary">rplK</name>
    <name type="ordered locus">Bphy_2852</name>
</gene>
<keyword id="KW-0488">Methylation</keyword>
<keyword id="KW-1185">Reference proteome</keyword>
<keyword id="KW-0687">Ribonucleoprotein</keyword>
<keyword id="KW-0689">Ribosomal protein</keyword>
<keyword id="KW-0694">RNA-binding</keyword>
<keyword id="KW-0699">rRNA-binding</keyword>
<evidence type="ECO:0000255" key="1">
    <source>
        <dbReference type="HAMAP-Rule" id="MF_00736"/>
    </source>
</evidence>
<evidence type="ECO:0000305" key="2"/>